<sequence length="796" mass="85842">MPLPGGLWWLLCCRRGFTLLHRDYGDGELSGDGDEDEDDETFELRTPSPAGGGRGSLDVTLTQPTRNGPISDRLQGWEETWSLIPDKGLPEEDPDIIVKGWLYREPRGGGARPWLLPRRAWFVLTRDSLDQFSSSGKGARRLGSLVLTSLCSVTGPERRPKETGLWSVTVSGRKHSIRLCSPRQAEAERWGVALREVIASKAPLETPTQLLLRDIQESCGDPEAVALIYRRNPILRHTSSALYAPLLPLPYEVSAPGPGYAPLREEAVRLFLALQALEGARRPGPLMQGVLQTCRDLPALQDELFLQLAKQTSGPAGPPGLPATQDPATLRYWQLLTCMSCTFRPGGAVRGHLLGHLERTEQALPDSELAEYARFIRKALGRTRGRELVPSLAEISALSRRQELLCTVHCPGAGACPVSIDSHTTAGEVARELVGRLGLARSRNAFALYEQRGAQERALAGGTLVADVLTRFENLTSEEAGLEDSPDCGWRLCLRLHGPLHPEGLSPEGHELPFLFEQAHALLLRGRPPPPEDTLRALAALRLQSLHRDFSPRGPLPLLDRLLPPPIPPREQPPCPTRRPPPSAALLAGALWSPGLAKRRAERARRGGTGRSTGSTAQVGGGGASTTAAVLGGWKRLRGMGQAEAMAAYLALAAQCPGFGAARYDVLELSTEPGGGAPQKLCLGLGAKAMSLSRPGETEPIHSVSYGHVAACQLIGPHTLALRVGDSQLLLQSPQVEEIMELVNAYLANPSPERPCRSGSSSGPPSQDLPDTSPPSQHQVLEEPQGQSGCLKQLQD</sequence>
<gene>
    <name type="primary">Plekhh3</name>
</gene>
<name>PKHH3_MOUSE</name>
<organism>
    <name type="scientific">Mus musculus</name>
    <name type="common">Mouse</name>
    <dbReference type="NCBI Taxonomy" id="10090"/>
    <lineage>
        <taxon>Eukaryota</taxon>
        <taxon>Metazoa</taxon>
        <taxon>Chordata</taxon>
        <taxon>Craniata</taxon>
        <taxon>Vertebrata</taxon>
        <taxon>Euteleostomi</taxon>
        <taxon>Mammalia</taxon>
        <taxon>Eutheria</taxon>
        <taxon>Euarchontoglires</taxon>
        <taxon>Glires</taxon>
        <taxon>Rodentia</taxon>
        <taxon>Myomorpha</taxon>
        <taxon>Muroidea</taxon>
        <taxon>Muridae</taxon>
        <taxon>Murinae</taxon>
        <taxon>Mus</taxon>
        <taxon>Mus</taxon>
    </lineage>
</organism>
<accession>Q8VCE9</accession>
<accession>Q3U3Z6</accession>
<accession>Q8R1H2</accession>
<protein>
    <recommendedName>
        <fullName>Pleckstrin homology domain-containing family H member 3</fullName>
        <shortName>PH domain-containing family H member 3</shortName>
    </recommendedName>
</protein>
<comment type="alternative products">
    <event type="alternative splicing"/>
    <isoform>
        <id>Q8VCE9-1</id>
        <name>1</name>
        <sequence type="displayed"/>
    </isoform>
    <isoform>
        <id>Q8VCE9-2</id>
        <name>2</name>
        <sequence type="described" ref="VSP_029399"/>
    </isoform>
    <isoform>
        <id>Q8VCE9-3</id>
        <name>3</name>
        <sequence type="described" ref="VSP_029399 VSP_029400 VSP_029401"/>
    </isoform>
    <isoform>
        <id>Q8VCE9-4</id>
        <name>4</name>
        <sequence type="described" ref="VSP_029400 VSP_029401"/>
    </isoform>
</comment>
<keyword id="KW-0025">Alternative splicing</keyword>
<keyword id="KW-0325">Glycoprotein</keyword>
<keyword id="KW-0488">Methylation</keyword>
<keyword id="KW-0597">Phosphoprotein</keyword>
<keyword id="KW-1185">Reference proteome</keyword>
<keyword id="KW-0732">Signal</keyword>
<dbReference type="EMBL" id="AK154510">
    <property type="protein sequence ID" value="BAE32639.1"/>
    <property type="molecule type" value="mRNA"/>
</dbReference>
<dbReference type="EMBL" id="AL590969">
    <property type="status" value="NOT_ANNOTATED_CDS"/>
    <property type="molecule type" value="Genomic_DNA"/>
</dbReference>
<dbReference type="EMBL" id="BC020025">
    <property type="protein sequence ID" value="AAH20025.1"/>
    <property type="molecule type" value="mRNA"/>
</dbReference>
<dbReference type="EMBL" id="BC024538">
    <property type="protein sequence ID" value="AAH24538.1"/>
    <property type="molecule type" value="mRNA"/>
</dbReference>
<dbReference type="CCDS" id="CCDS25453.1">
    <molecule id="Q8VCE9-1"/>
</dbReference>
<dbReference type="CCDS" id="CCDS83899.1">
    <molecule id="Q8VCE9-2"/>
</dbReference>
<dbReference type="RefSeq" id="NP_001333698.1">
    <molecule id="Q8VCE9-2"/>
    <property type="nucleotide sequence ID" value="NM_001346769.1"/>
</dbReference>
<dbReference type="RefSeq" id="NP_666142.1">
    <molecule id="Q8VCE9-1"/>
    <property type="nucleotide sequence ID" value="NM_146030.2"/>
</dbReference>
<dbReference type="SMR" id="Q8VCE9"/>
<dbReference type="BioGRID" id="229859">
    <property type="interactions" value="1"/>
</dbReference>
<dbReference type="FunCoup" id="Q8VCE9">
    <property type="interactions" value="46"/>
</dbReference>
<dbReference type="STRING" id="10090.ENSMUSP00000046044"/>
<dbReference type="GlyCosmos" id="Q8VCE9">
    <property type="glycosylation" value="1 site, No reported glycans"/>
</dbReference>
<dbReference type="GlyGen" id="Q8VCE9">
    <property type="glycosylation" value="1 site"/>
</dbReference>
<dbReference type="iPTMnet" id="Q8VCE9"/>
<dbReference type="PhosphoSitePlus" id="Q8VCE9"/>
<dbReference type="PaxDb" id="10090-ENSMUSP00000046044"/>
<dbReference type="ProteomicsDB" id="289655">
    <molecule id="Q8VCE9-1"/>
</dbReference>
<dbReference type="ProteomicsDB" id="289656">
    <molecule id="Q8VCE9-2"/>
</dbReference>
<dbReference type="ProteomicsDB" id="289657">
    <molecule id="Q8VCE9-3"/>
</dbReference>
<dbReference type="ProteomicsDB" id="289658">
    <molecule id="Q8VCE9-4"/>
</dbReference>
<dbReference type="Antibodypedia" id="29328">
    <property type="antibodies" value="30 antibodies from 13 providers"/>
</dbReference>
<dbReference type="DNASU" id="217198"/>
<dbReference type="Ensembl" id="ENSMUST00000043397.14">
    <molecule id="Q8VCE9-1"/>
    <property type="protein sequence ID" value="ENSMUSP00000046044.8"/>
    <property type="gene ID" value="ENSMUSG00000035172.16"/>
</dbReference>
<dbReference type="Ensembl" id="ENSMUST00000129895.8">
    <molecule id="Q8VCE9-4"/>
    <property type="protein sequence ID" value="ENSMUSP00000137841.2"/>
    <property type="gene ID" value="ENSMUSG00000035172.16"/>
</dbReference>
<dbReference type="Ensembl" id="ENSMUST00000164474.8">
    <molecule id="Q8VCE9-2"/>
    <property type="protein sequence ID" value="ENSMUSP00000127088.2"/>
    <property type="gene ID" value="ENSMUSG00000035172.16"/>
</dbReference>
<dbReference type="GeneID" id="217198"/>
<dbReference type="KEGG" id="mmu:217198"/>
<dbReference type="UCSC" id="uc007lnq.2">
    <molecule id="Q8VCE9-1"/>
    <property type="organism name" value="mouse"/>
</dbReference>
<dbReference type="UCSC" id="uc007lnr.2">
    <molecule id="Q8VCE9-2"/>
    <property type="organism name" value="mouse"/>
</dbReference>
<dbReference type="AGR" id="MGI:2384950"/>
<dbReference type="CTD" id="79990"/>
<dbReference type="MGI" id="MGI:2384950">
    <property type="gene designation" value="Plekhh3"/>
</dbReference>
<dbReference type="VEuPathDB" id="HostDB:ENSMUSG00000035172"/>
<dbReference type="eggNOG" id="KOG4229">
    <property type="taxonomic scope" value="Eukaryota"/>
</dbReference>
<dbReference type="GeneTree" id="ENSGT00940000159764"/>
<dbReference type="HOGENOM" id="CLU_001626_4_0_1"/>
<dbReference type="InParanoid" id="Q8VCE9"/>
<dbReference type="OMA" id="QCLMGDF"/>
<dbReference type="OrthoDB" id="6108017at2759"/>
<dbReference type="PhylomeDB" id="Q8VCE9"/>
<dbReference type="TreeFam" id="TF327852"/>
<dbReference type="BioGRID-ORCS" id="217198">
    <property type="hits" value="3 hits in 79 CRISPR screens"/>
</dbReference>
<dbReference type="PRO" id="PR:Q8VCE9"/>
<dbReference type="Proteomes" id="UP000000589">
    <property type="component" value="Chromosome 11"/>
</dbReference>
<dbReference type="RNAct" id="Q8VCE9">
    <property type="molecule type" value="protein"/>
</dbReference>
<dbReference type="Bgee" id="ENSMUSG00000035172">
    <property type="expression patterns" value="Expressed in lip and 169 other cell types or tissues"/>
</dbReference>
<dbReference type="ExpressionAtlas" id="Q8VCE9">
    <property type="expression patterns" value="baseline and differential"/>
</dbReference>
<dbReference type="GO" id="GO:0005856">
    <property type="term" value="C:cytoskeleton"/>
    <property type="evidence" value="ECO:0007669"/>
    <property type="project" value="InterPro"/>
</dbReference>
<dbReference type="CDD" id="cd14473">
    <property type="entry name" value="FERM_B-lobe"/>
    <property type="match status" value="1"/>
</dbReference>
<dbReference type="FunFam" id="1.25.40.530:FF:000001">
    <property type="entry name" value="Pleckstrin homology domain-containing family H member 2"/>
    <property type="match status" value="1"/>
</dbReference>
<dbReference type="FunFam" id="2.30.29.30:FF:000276">
    <property type="entry name" value="pleckstrin homology domain-containing family H member 3"/>
    <property type="match status" value="1"/>
</dbReference>
<dbReference type="FunFam" id="3.10.20.90:FF:000182">
    <property type="entry name" value="pleckstrin homology domain-containing family H member 3 isoform X1"/>
    <property type="match status" value="1"/>
</dbReference>
<dbReference type="Gene3D" id="1.20.80.10">
    <property type="match status" value="1"/>
</dbReference>
<dbReference type="Gene3D" id="1.25.40.530">
    <property type="entry name" value="MyTH4 domain"/>
    <property type="match status" value="1"/>
</dbReference>
<dbReference type="Gene3D" id="3.10.20.90">
    <property type="entry name" value="Phosphatidylinositol 3-kinase Catalytic Subunit, Chain A, domain 1"/>
    <property type="match status" value="1"/>
</dbReference>
<dbReference type="Gene3D" id="2.30.29.30">
    <property type="entry name" value="Pleckstrin-homology domain (PH domain)/Phosphotyrosine-binding domain (PTB)"/>
    <property type="match status" value="2"/>
</dbReference>
<dbReference type="InterPro" id="IPR051724">
    <property type="entry name" value="Actin_motor_Myosin"/>
</dbReference>
<dbReference type="InterPro" id="IPR019749">
    <property type="entry name" value="Band_41_domain"/>
</dbReference>
<dbReference type="InterPro" id="IPR014352">
    <property type="entry name" value="FERM/acyl-CoA-bd_prot_sf"/>
</dbReference>
<dbReference type="InterPro" id="IPR035963">
    <property type="entry name" value="FERM_2"/>
</dbReference>
<dbReference type="InterPro" id="IPR019748">
    <property type="entry name" value="FERM_central"/>
</dbReference>
<dbReference type="InterPro" id="IPR000299">
    <property type="entry name" value="FERM_domain"/>
</dbReference>
<dbReference type="InterPro" id="IPR000857">
    <property type="entry name" value="MyTH4_dom"/>
</dbReference>
<dbReference type="InterPro" id="IPR038185">
    <property type="entry name" value="MyTH4_dom_sf"/>
</dbReference>
<dbReference type="InterPro" id="IPR011993">
    <property type="entry name" value="PH-like_dom_sf"/>
</dbReference>
<dbReference type="InterPro" id="IPR001849">
    <property type="entry name" value="PH_domain"/>
</dbReference>
<dbReference type="PANTHER" id="PTHR46049">
    <property type="entry name" value="AGAP003327-PA"/>
    <property type="match status" value="1"/>
</dbReference>
<dbReference type="PANTHER" id="PTHR46049:SF5">
    <property type="entry name" value="PLECKSTRIN HOMOLOGY DOMAIN-CONTAINING FAMILY H MEMBER 3"/>
    <property type="match status" value="1"/>
</dbReference>
<dbReference type="Pfam" id="PF00373">
    <property type="entry name" value="FERM_M"/>
    <property type="match status" value="1"/>
</dbReference>
<dbReference type="Pfam" id="PF00784">
    <property type="entry name" value="MyTH4"/>
    <property type="match status" value="1"/>
</dbReference>
<dbReference type="Pfam" id="PF21989">
    <property type="entry name" value="RA_2"/>
    <property type="match status" value="1"/>
</dbReference>
<dbReference type="SMART" id="SM00295">
    <property type="entry name" value="B41"/>
    <property type="match status" value="1"/>
</dbReference>
<dbReference type="SMART" id="SM00139">
    <property type="entry name" value="MyTH4"/>
    <property type="match status" value="1"/>
</dbReference>
<dbReference type="SMART" id="SM00233">
    <property type="entry name" value="PH"/>
    <property type="match status" value="1"/>
</dbReference>
<dbReference type="SUPFAM" id="SSF50729">
    <property type="entry name" value="PH domain-like"/>
    <property type="match status" value="1"/>
</dbReference>
<dbReference type="SUPFAM" id="SSF47031">
    <property type="entry name" value="Second domain of FERM"/>
    <property type="match status" value="1"/>
</dbReference>
<dbReference type="PROSITE" id="PS50057">
    <property type="entry name" value="FERM_3"/>
    <property type="match status" value="1"/>
</dbReference>
<dbReference type="PROSITE" id="PS51016">
    <property type="entry name" value="MYTH4"/>
    <property type="match status" value="1"/>
</dbReference>
<dbReference type="PROSITE" id="PS50003">
    <property type="entry name" value="PH_DOMAIN"/>
    <property type="match status" value="1"/>
</dbReference>
<evidence type="ECO:0000250" key="1">
    <source>
        <dbReference type="UniProtKB" id="Q7Z736"/>
    </source>
</evidence>
<evidence type="ECO:0000255" key="2"/>
<evidence type="ECO:0000255" key="3">
    <source>
        <dbReference type="PROSITE-ProRule" id="PRU00084"/>
    </source>
</evidence>
<evidence type="ECO:0000255" key="4">
    <source>
        <dbReference type="PROSITE-ProRule" id="PRU00145"/>
    </source>
</evidence>
<evidence type="ECO:0000255" key="5">
    <source>
        <dbReference type="PROSITE-ProRule" id="PRU00359"/>
    </source>
</evidence>
<evidence type="ECO:0000256" key="6">
    <source>
        <dbReference type="SAM" id="MobiDB-lite"/>
    </source>
</evidence>
<evidence type="ECO:0000303" key="7">
    <source>
    </source>
</evidence>
<evidence type="ECO:0000303" key="8">
    <source>
    </source>
</evidence>
<proteinExistence type="evidence at transcript level"/>
<reference key="1">
    <citation type="journal article" date="2005" name="Science">
        <title>The transcriptional landscape of the mammalian genome.</title>
        <authorList>
            <person name="Carninci P."/>
            <person name="Kasukawa T."/>
            <person name="Katayama S."/>
            <person name="Gough J."/>
            <person name="Frith M.C."/>
            <person name="Maeda N."/>
            <person name="Oyama R."/>
            <person name="Ravasi T."/>
            <person name="Lenhard B."/>
            <person name="Wells C."/>
            <person name="Kodzius R."/>
            <person name="Shimokawa K."/>
            <person name="Bajic V.B."/>
            <person name="Brenner S.E."/>
            <person name="Batalov S."/>
            <person name="Forrest A.R."/>
            <person name="Zavolan M."/>
            <person name="Davis M.J."/>
            <person name="Wilming L.G."/>
            <person name="Aidinis V."/>
            <person name="Allen J.E."/>
            <person name="Ambesi-Impiombato A."/>
            <person name="Apweiler R."/>
            <person name="Aturaliya R.N."/>
            <person name="Bailey T.L."/>
            <person name="Bansal M."/>
            <person name="Baxter L."/>
            <person name="Beisel K.W."/>
            <person name="Bersano T."/>
            <person name="Bono H."/>
            <person name="Chalk A.M."/>
            <person name="Chiu K.P."/>
            <person name="Choudhary V."/>
            <person name="Christoffels A."/>
            <person name="Clutterbuck D.R."/>
            <person name="Crowe M.L."/>
            <person name="Dalla E."/>
            <person name="Dalrymple B.P."/>
            <person name="de Bono B."/>
            <person name="Della Gatta G."/>
            <person name="di Bernardo D."/>
            <person name="Down T."/>
            <person name="Engstrom P."/>
            <person name="Fagiolini M."/>
            <person name="Faulkner G."/>
            <person name="Fletcher C.F."/>
            <person name="Fukushima T."/>
            <person name="Furuno M."/>
            <person name="Futaki S."/>
            <person name="Gariboldi M."/>
            <person name="Georgii-Hemming P."/>
            <person name="Gingeras T.R."/>
            <person name="Gojobori T."/>
            <person name="Green R.E."/>
            <person name="Gustincich S."/>
            <person name="Harbers M."/>
            <person name="Hayashi Y."/>
            <person name="Hensch T.K."/>
            <person name="Hirokawa N."/>
            <person name="Hill D."/>
            <person name="Huminiecki L."/>
            <person name="Iacono M."/>
            <person name="Ikeo K."/>
            <person name="Iwama A."/>
            <person name="Ishikawa T."/>
            <person name="Jakt M."/>
            <person name="Kanapin A."/>
            <person name="Katoh M."/>
            <person name="Kawasawa Y."/>
            <person name="Kelso J."/>
            <person name="Kitamura H."/>
            <person name="Kitano H."/>
            <person name="Kollias G."/>
            <person name="Krishnan S.P."/>
            <person name="Kruger A."/>
            <person name="Kummerfeld S.K."/>
            <person name="Kurochkin I.V."/>
            <person name="Lareau L.F."/>
            <person name="Lazarevic D."/>
            <person name="Lipovich L."/>
            <person name="Liu J."/>
            <person name="Liuni S."/>
            <person name="McWilliam S."/>
            <person name="Madan Babu M."/>
            <person name="Madera M."/>
            <person name="Marchionni L."/>
            <person name="Matsuda H."/>
            <person name="Matsuzawa S."/>
            <person name="Miki H."/>
            <person name="Mignone F."/>
            <person name="Miyake S."/>
            <person name="Morris K."/>
            <person name="Mottagui-Tabar S."/>
            <person name="Mulder N."/>
            <person name="Nakano N."/>
            <person name="Nakauchi H."/>
            <person name="Ng P."/>
            <person name="Nilsson R."/>
            <person name="Nishiguchi S."/>
            <person name="Nishikawa S."/>
            <person name="Nori F."/>
            <person name="Ohara O."/>
            <person name="Okazaki Y."/>
            <person name="Orlando V."/>
            <person name="Pang K.C."/>
            <person name="Pavan W.J."/>
            <person name="Pavesi G."/>
            <person name="Pesole G."/>
            <person name="Petrovsky N."/>
            <person name="Piazza S."/>
            <person name="Reed J."/>
            <person name="Reid J.F."/>
            <person name="Ring B.Z."/>
            <person name="Ringwald M."/>
            <person name="Rost B."/>
            <person name="Ruan Y."/>
            <person name="Salzberg S.L."/>
            <person name="Sandelin A."/>
            <person name="Schneider C."/>
            <person name="Schoenbach C."/>
            <person name="Sekiguchi K."/>
            <person name="Semple C.A."/>
            <person name="Seno S."/>
            <person name="Sessa L."/>
            <person name="Sheng Y."/>
            <person name="Shibata Y."/>
            <person name="Shimada H."/>
            <person name="Shimada K."/>
            <person name="Silva D."/>
            <person name="Sinclair B."/>
            <person name="Sperling S."/>
            <person name="Stupka E."/>
            <person name="Sugiura K."/>
            <person name="Sultana R."/>
            <person name="Takenaka Y."/>
            <person name="Taki K."/>
            <person name="Tammoja K."/>
            <person name="Tan S.L."/>
            <person name="Tang S."/>
            <person name="Taylor M.S."/>
            <person name="Tegner J."/>
            <person name="Teichmann S.A."/>
            <person name="Ueda H.R."/>
            <person name="van Nimwegen E."/>
            <person name="Verardo R."/>
            <person name="Wei C.L."/>
            <person name="Yagi K."/>
            <person name="Yamanishi H."/>
            <person name="Zabarovsky E."/>
            <person name="Zhu S."/>
            <person name="Zimmer A."/>
            <person name="Hide W."/>
            <person name="Bult C."/>
            <person name="Grimmond S.M."/>
            <person name="Teasdale R.D."/>
            <person name="Liu E.T."/>
            <person name="Brusic V."/>
            <person name="Quackenbush J."/>
            <person name="Wahlestedt C."/>
            <person name="Mattick J.S."/>
            <person name="Hume D.A."/>
            <person name="Kai C."/>
            <person name="Sasaki D."/>
            <person name="Tomaru Y."/>
            <person name="Fukuda S."/>
            <person name="Kanamori-Katayama M."/>
            <person name="Suzuki M."/>
            <person name="Aoki J."/>
            <person name="Arakawa T."/>
            <person name="Iida J."/>
            <person name="Imamura K."/>
            <person name="Itoh M."/>
            <person name="Kato T."/>
            <person name="Kawaji H."/>
            <person name="Kawagashira N."/>
            <person name="Kawashima T."/>
            <person name="Kojima M."/>
            <person name="Kondo S."/>
            <person name="Konno H."/>
            <person name="Nakano K."/>
            <person name="Ninomiya N."/>
            <person name="Nishio T."/>
            <person name="Okada M."/>
            <person name="Plessy C."/>
            <person name="Shibata K."/>
            <person name="Shiraki T."/>
            <person name="Suzuki S."/>
            <person name="Tagami M."/>
            <person name="Waki K."/>
            <person name="Watahiki A."/>
            <person name="Okamura-Oho Y."/>
            <person name="Suzuki H."/>
            <person name="Kawai J."/>
            <person name="Hayashizaki Y."/>
        </authorList>
    </citation>
    <scope>NUCLEOTIDE SEQUENCE [LARGE SCALE MRNA] (ISOFORM 2)</scope>
    <scope>NUCLEOTIDE SEQUENCE [LARGE SCALE MRNA] (ISOFORM 4)</scope>
    <source>
        <strain>NOD</strain>
    </source>
</reference>
<reference key="2">
    <citation type="journal article" date="2009" name="PLoS Biol.">
        <title>Lineage-specific biology revealed by a finished genome assembly of the mouse.</title>
        <authorList>
            <person name="Church D.M."/>
            <person name="Goodstadt L."/>
            <person name="Hillier L.W."/>
            <person name="Zody M.C."/>
            <person name="Goldstein S."/>
            <person name="She X."/>
            <person name="Bult C.J."/>
            <person name="Agarwala R."/>
            <person name="Cherry J.L."/>
            <person name="DiCuccio M."/>
            <person name="Hlavina W."/>
            <person name="Kapustin Y."/>
            <person name="Meric P."/>
            <person name="Maglott D."/>
            <person name="Birtle Z."/>
            <person name="Marques A.C."/>
            <person name="Graves T."/>
            <person name="Zhou S."/>
            <person name="Teague B."/>
            <person name="Potamousis K."/>
            <person name="Churas C."/>
            <person name="Place M."/>
            <person name="Herschleb J."/>
            <person name="Runnheim R."/>
            <person name="Forrest D."/>
            <person name="Amos-Landgraf J."/>
            <person name="Schwartz D.C."/>
            <person name="Cheng Z."/>
            <person name="Lindblad-Toh K."/>
            <person name="Eichler E.E."/>
            <person name="Ponting C.P."/>
        </authorList>
    </citation>
    <scope>NUCLEOTIDE SEQUENCE [LARGE SCALE GENOMIC DNA]</scope>
    <source>
        <strain>C57BL/6J</strain>
    </source>
</reference>
<reference key="3">
    <citation type="journal article" date="2004" name="Genome Res.">
        <title>The status, quality, and expansion of the NIH full-length cDNA project: the Mammalian Gene Collection (MGC).</title>
        <authorList>
            <consortium name="The MGC Project Team"/>
        </authorList>
    </citation>
    <scope>NUCLEOTIDE SEQUENCE [LARGE SCALE MRNA] (ISOFORM 1)</scope>
    <scope>NUCLEOTIDE SEQUENCE [LARGE SCALE MRNA] OF 384-796 (ISOFORM 3)</scope>
    <source>
        <strain>FVB/N</strain>
        <tissue>Colon</tissue>
        <tissue>Mammary tumor</tissue>
    </source>
</reference>
<feature type="signal peptide" evidence="2">
    <location>
        <begin position="1"/>
        <end position="18"/>
    </location>
</feature>
<feature type="chain" id="PRO_0000311109" description="Pleckstrin homology domain-containing family H member 3">
    <location>
        <begin position="19"/>
        <end position="796"/>
    </location>
</feature>
<feature type="domain" description="PH" evidence="4">
    <location>
        <begin position="95"/>
        <end position="199"/>
    </location>
</feature>
<feature type="domain" description="MyTH4" evidence="5">
    <location>
        <begin position="237"/>
        <end position="399"/>
    </location>
</feature>
<feature type="domain" description="FERM" evidence="3">
    <location>
        <begin position="404"/>
        <end position="757"/>
    </location>
</feature>
<feature type="region of interest" description="Disordered" evidence="6">
    <location>
        <begin position="28"/>
        <end position="71"/>
    </location>
</feature>
<feature type="region of interest" description="Disordered" evidence="6">
    <location>
        <begin position="557"/>
        <end position="584"/>
    </location>
</feature>
<feature type="region of interest" description="Disordered" evidence="6">
    <location>
        <begin position="598"/>
        <end position="625"/>
    </location>
</feature>
<feature type="region of interest" description="Disordered" evidence="6">
    <location>
        <begin position="750"/>
        <end position="796"/>
    </location>
</feature>
<feature type="compositionally biased region" description="Acidic residues" evidence="6">
    <location>
        <begin position="29"/>
        <end position="41"/>
    </location>
</feature>
<feature type="compositionally biased region" description="Polar residues" evidence="6">
    <location>
        <begin position="59"/>
        <end position="68"/>
    </location>
</feature>
<feature type="compositionally biased region" description="Pro residues" evidence="6">
    <location>
        <begin position="563"/>
        <end position="583"/>
    </location>
</feature>
<feature type="compositionally biased region" description="Basic residues" evidence="6">
    <location>
        <begin position="598"/>
        <end position="608"/>
    </location>
</feature>
<feature type="compositionally biased region" description="Low complexity" evidence="6">
    <location>
        <begin position="757"/>
        <end position="766"/>
    </location>
</feature>
<feature type="compositionally biased region" description="Polar residues" evidence="6">
    <location>
        <begin position="774"/>
        <end position="796"/>
    </location>
</feature>
<feature type="modified residue" description="Phosphoserine" evidence="1">
    <location>
        <position position="30"/>
    </location>
</feature>
<feature type="modified residue" description="Omega-N-methylarginine" evidence="1">
    <location>
        <position position="638"/>
    </location>
</feature>
<feature type="glycosylation site" description="N-linked (GlcNAc...) asparagine" evidence="2">
    <location>
        <position position="474"/>
    </location>
</feature>
<feature type="splice variant" id="VSP_029399" description="In isoform 2 and isoform 3." evidence="7 8">
    <original>RFEN</original>
    <variation>S</variation>
    <location>
        <begin position="471"/>
        <end position="474"/>
    </location>
</feature>
<feature type="splice variant" id="VSP_029400" description="In isoform 3 and isoform 4." evidence="7 8">
    <original>YDVLELSTEPGGGAPQKLCLGLGAKAMSLSRPGETEPIHSVS</original>
    <variation>SLVEVLHRSSAWVWEQRPCRSPGLVRQNPSTVSAMVMWPPAS</variation>
    <location>
        <begin position="664"/>
        <end position="705"/>
    </location>
</feature>
<feature type="splice variant" id="VSP_029401" description="In isoform 3 and isoform 4." evidence="7 8">
    <location>
        <begin position="706"/>
        <end position="796"/>
    </location>
</feature>